<organism>
    <name type="scientific">Pseudomonas putida (strain ATCC 700007 / DSM 6899 / JCM 31910 / BCRC 17059 / LMG 24140 / F1)</name>
    <dbReference type="NCBI Taxonomy" id="351746"/>
    <lineage>
        <taxon>Bacteria</taxon>
        <taxon>Pseudomonadati</taxon>
        <taxon>Pseudomonadota</taxon>
        <taxon>Gammaproteobacteria</taxon>
        <taxon>Pseudomonadales</taxon>
        <taxon>Pseudomonadaceae</taxon>
        <taxon>Pseudomonas</taxon>
    </lineage>
</organism>
<keyword id="KW-0012">Acyltransferase</keyword>
<keyword id="KW-0963">Cytoplasm</keyword>
<keyword id="KW-0808">Transferase</keyword>
<comment type="function">
    <text evidence="1">Functions in the N-end rule pathway of protein degradation where it conjugates Leu from its aminoacyl-tRNA to the N-termini of proteins containing an N-terminal aspartate or glutamate.</text>
</comment>
<comment type="catalytic activity">
    <reaction evidence="1">
        <text>N-terminal L-glutamyl-[protein] + L-leucyl-tRNA(Leu) = N-terminal L-leucyl-L-glutamyl-[protein] + tRNA(Leu) + H(+)</text>
        <dbReference type="Rhea" id="RHEA:50412"/>
        <dbReference type="Rhea" id="RHEA-COMP:9613"/>
        <dbReference type="Rhea" id="RHEA-COMP:9622"/>
        <dbReference type="Rhea" id="RHEA-COMP:12664"/>
        <dbReference type="Rhea" id="RHEA-COMP:12668"/>
        <dbReference type="ChEBI" id="CHEBI:15378"/>
        <dbReference type="ChEBI" id="CHEBI:64721"/>
        <dbReference type="ChEBI" id="CHEBI:78442"/>
        <dbReference type="ChEBI" id="CHEBI:78494"/>
        <dbReference type="ChEBI" id="CHEBI:133041"/>
        <dbReference type="EC" id="2.3.2.29"/>
    </reaction>
</comment>
<comment type="catalytic activity">
    <reaction evidence="1">
        <text>N-terminal L-aspartyl-[protein] + L-leucyl-tRNA(Leu) = N-terminal L-leucyl-L-aspartyl-[protein] + tRNA(Leu) + H(+)</text>
        <dbReference type="Rhea" id="RHEA:50420"/>
        <dbReference type="Rhea" id="RHEA-COMP:9613"/>
        <dbReference type="Rhea" id="RHEA-COMP:9622"/>
        <dbReference type="Rhea" id="RHEA-COMP:12669"/>
        <dbReference type="Rhea" id="RHEA-COMP:12674"/>
        <dbReference type="ChEBI" id="CHEBI:15378"/>
        <dbReference type="ChEBI" id="CHEBI:64720"/>
        <dbReference type="ChEBI" id="CHEBI:78442"/>
        <dbReference type="ChEBI" id="CHEBI:78494"/>
        <dbReference type="ChEBI" id="CHEBI:133042"/>
        <dbReference type="EC" id="2.3.2.29"/>
    </reaction>
</comment>
<comment type="subcellular location">
    <subcellularLocation>
        <location evidence="1">Cytoplasm</location>
    </subcellularLocation>
</comment>
<comment type="similarity">
    <text evidence="1">Belongs to the R-transferase family. Bpt subfamily.</text>
</comment>
<dbReference type="EC" id="2.3.2.29" evidence="1"/>
<dbReference type="EMBL" id="CP000712">
    <property type="protein sequence ID" value="ABQ77980.1"/>
    <property type="molecule type" value="Genomic_DNA"/>
</dbReference>
<dbReference type="SMR" id="A5W1H0"/>
<dbReference type="KEGG" id="ppf:Pput_1827"/>
<dbReference type="eggNOG" id="COG2935">
    <property type="taxonomic scope" value="Bacteria"/>
</dbReference>
<dbReference type="HOGENOM" id="CLU_077607_0_0_6"/>
<dbReference type="GO" id="GO:0005737">
    <property type="term" value="C:cytoplasm"/>
    <property type="evidence" value="ECO:0007669"/>
    <property type="project" value="UniProtKB-SubCell"/>
</dbReference>
<dbReference type="GO" id="GO:0004057">
    <property type="term" value="F:arginyl-tRNA--protein transferase activity"/>
    <property type="evidence" value="ECO:0007669"/>
    <property type="project" value="InterPro"/>
</dbReference>
<dbReference type="GO" id="GO:0008914">
    <property type="term" value="F:leucyl-tRNA--protein transferase activity"/>
    <property type="evidence" value="ECO:0007669"/>
    <property type="project" value="UniProtKB-UniRule"/>
</dbReference>
<dbReference type="GO" id="GO:0071596">
    <property type="term" value="P:ubiquitin-dependent protein catabolic process via the N-end rule pathway"/>
    <property type="evidence" value="ECO:0007669"/>
    <property type="project" value="InterPro"/>
</dbReference>
<dbReference type="HAMAP" id="MF_00689">
    <property type="entry name" value="Bpt"/>
    <property type="match status" value="1"/>
</dbReference>
<dbReference type="InterPro" id="IPR016181">
    <property type="entry name" value="Acyl_CoA_acyltransferase"/>
</dbReference>
<dbReference type="InterPro" id="IPR017138">
    <property type="entry name" value="Asp_Glu_LeuTrfase"/>
</dbReference>
<dbReference type="InterPro" id="IPR030700">
    <property type="entry name" value="N-end_Aminoacyl_Trfase"/>
</dbReference>
<dbReference type="InterPro" id="IPR007472">
    <property type="entry name" value="N-end_Aminoacyl_Trfase_C"/>
</dbReference>
<dbReference type="InterPro" id="IPR007471">
    <property type="entry name" value="N-end_Aminoacyl_Trfase_N"/>
</dbReference>
<dbReference type="NCBIfam" id="NF002341">
    <property type="entry name" value="PRK01305.1-1"/>
    <property type="match status" value="1"/>
</dbReference>
<dbReference type="NCBIfam" id="NF002342">
    <property type="entry name" value="PRK01305.1-3"/>
    <property type="match status" value="1"/>
</dbReference>
<dbReference type="NCBIfam" id="NF002345">
    <property type="entry name" value="PRK01305.2-2"/>
    <property type="match status" value="1"/>
</dbReference>
<dbReference type="NCBIfam" id="NF002346">
    <property type="entry name" value="PRK01305.2-3"/>
    <property type="match status" value="1"/>
</dbReference>
<dbReference type="PANTHER" id="PTHR21367">
    <property type="entry name" value="ARGININE-TRNA-PROTEIN TRANSFERASE 1"/>
    <property type="match status" value="1"/>
</dbReference>
<dbReference type="PANTHER" id="PTHR21367:SF1">
    <property type="entry name" value="ARGINYL-TRNA--PROTEIN TRANSFERASE 1"/>
    <property type="match status" value="1"/>
</dbReference>
<dbReference type="Pfam" id="PF04377">
    <property type="entry name" value="ATE_C"/>
    <property type="match status" value="1"/>
</dbReference>
<dbReference type="Pfam" id="PF04376">
    <property type="entry name" value="ATE_N"/>
    <property type="match status" value="1"/>
</dbReference>
<dbReference type="PIRSF" id="PIRSF037208">
    <property type="entry name" value="ATE_pro_prd"/>
    <property type="match status" value="1"/>
</dbReference>
<dbReference type="SUPFAM" id="SSF55729">
    <property type="entry name" value="Acyl-CoA N-acyltransferases (Nat)"/>
    <property type="match status" value="1"/>
</dbReference>
<evidence type="ECO:0000255" key="1">
    <source>
        <dbReference type="HAMAP-Rule" id="MF_00689"/>
    </source>
</evidence>
<feature type="chain" id="PRO_1000045145" description="Aspartate/glutamate leucyltransferase">
    <location>
        <begin position="1"/>
        <end position="235"/>
    </location>
</feature>
<gene>
    <name evidence="1" type="primary">bpt</name>
    <name type="ordered locus">Pput_1827</name>
</gene>
<proteinExistence type="inferred from homology"/>
<accession>A5W1H0</accession>
<sequence length="235" mass="27875">MTELARLKFYATQPHSCSYLPEEQATTLFLDPSQPMDVHVYADLSEMGFRRSGDHLYRPHCQNCNACVPARIPAARFIPNRQQRRILKRNADLTVTAARPAFKEEYFELYRRYIETRHADGDMYPPSRDQFSTFLVRDLPFCWFYEFRLEGRLMAVAVCDLLPNGLSAVYTFYEPDEDRRSLGRFAILWQITEALRQNLEAVYLGYWIKNCKKMNYKTQYRPIELLINQRWVTLN</sequence>
<protein>
    <recommendedName>
        <fullName evidence="1">Aspartate/glutamate leucyltransferase</fullName>
        <ecNumber evidence="1">2.3.2.29</ecNumber>
    </recommendedName>
</protein>
<reference key="1">
    <citation type="submission" date="2007-05" db="EMBL/GenBank/DDBJ databases">
        <title>Complete sequence of Pseudomonas putida F1.</title>
        <authorList>
            <consortium name="US DOE Joint Genome Institute"/>
            <person name="Copeland A."/>
            <person name="Lucas S."/>
            <person name="Lapidus A."/>
            <person name="Barry K."/>
            <person name="Detter J.C."/>
            <person name="Glavina del Rio T."/>
            <person name="Hammon N."/>
            <person name="Israni S."/>
            <person name="Dalin E."/>
            <person name="Tice H."/>
            <person name="Pitluck S."/>
            <person name="Chain P."/>
            <person name="Malfatti S."/>
            <person name="Shin M."/>
            <person name="Vergez L."/>
            <person name="Schmutz J."/>
            <person name="Larimer F."/>
            <person name="Land M."/>
            <person name="Hauser L."/>
            <person name="Kyrpides N."/>
            <person name="Lykidis A."/>
            <person name="Parales R."/>
            <person name="Richardson P."/>
        </authorList>
    </citation>
    <scope>NUCLEOTIDE SEQUENCE [LARGE SCALE GENOMIC DNA]</scope>
    <source>
        <strain>ATCC 700007 / DSM 6899 / JCM 31910 / BCRC 17059 / LMG 24140 / F1</strain>
    </source>
</reference>
<name>BPT_PSEP1</name>